<protein>
    <recommendedName>
        <fullName evidence="1">Probable [Fe-S]-dependent transcriptional repressor</fullName>
    </recommendedName>
</protein>
<feature type="chain" id="PRO_0000313062" description="Probable [Fe-S]-dependent transcriptional repressor">
    <location>
        <begin position="1"/>
        <end position="79"/>
    </location>
</feature>
<feature type="binding site" evidence="1">
    <location>
        <position position="54"/>
    </location>
    <ligand>
        <name>iron-sulfur cluster</name>
        <dbReference type="ChEBI" id="CHEBI:30408"/>
    </ligand>
</feature>
<feature type="binding site" evidence="1">
    <location>
        <position position="59"/>
    </location>
    <ligand>
        <name>iron-sulfur cluster</name>
        <dbReference type="ChEBI" id="CHEBI:30408"/>
    </ligand>
</feature>
<feature type="binding site" evidence="1">
    <location>
        <position position="62"/>
    </location>
    <ligand>
        <name>iron-sulfur cluster</name>
        <dbReference type="ChEBI" id="CHEBI:30408"/>
    </ligand>
</feature>
<feature type="binding site" evidence="1">
    <location>
        <position position="68"/>
    </location>
    <ligand>
        <name>iron-sulfur cluster</name>
        <dbReference type="ChEBI" id="CHEBI:30408"/>
    </ligand>
</feature>
<evidence type="ECO:0000255" key="1">
    <source>
        <dbReference type="HAMAP-Rule" id="MF_01586"/>
    </source>
</evidence>
<gene>
    <name evidence="1" type="primary">feoC</name>
    <name type="ordered locus">plu0207</name>
</gene>
<proteinExistence type="inferred from homology"/>
<comment type="function">
    <text evidence="1">May function as a transcriptional regulator that controls feoABC expression.</text>
</comment>
<comment type="similarity">
    <text evidence="1">Belongs to the FeoC family.</text>
</comment>
<accession>Q7N9V4</accession>
<organism>
    <name type="scientific">Photorhabdus laumondii subsp. laumondii (strain DSM 15139 / CIP 105565 / TT01)</name>
    <name type="common">Photorhabdus luminescens subsp. laumondii</name>
    <dbReference type="NCBI Taxonomy" id="243265"/>
    <lineage>
        <taxon>Bacteria</taxon>
        <taxon>Pseudomonadati</taxon>
        <taxon>Pseudomonadota</taxon>
        <taxon>Gammaproteobacteria</taxon>
        <taxon>Enterobacterales</taxon>
        <taxon>Morganellaceae</taxon>
        <taxon>Photorhabdus</taxon>
    </lineage>
</organism>
<reference key="1">
    <citation type="journal article" date="2003" name="Nat. Biotechnol.">
        <title>The genome sequence of the entomopathogenic bacterium Photorhabdus luminescens.</title>
        <authorList>
            <person name="Duchaud E."/>
            <person name="Rusniok C."/>
            <person name="Frangeul L."/>
            <person name="Buchrieser C."/>
            <person name="Givaudan A."/>
            <person name="Taourit S."/>
            <person name="Bocs S."/>
            <person name="Boursaux-Eude C."/>
            <person name="Chandler M."/>
            <person name="Charles J.-F."/>
            <person name="Dassa E."/>
            <person name="Derose R."/>
            <person name="Derzelle S."/>
            <person name="Freyssinet G."/>
            <person name="Gaudriault S."/>
            <person name="Medigue C."/>
            <person name="Lanois A."/>
            <person name="Powell K."/>
            <person name="Siguier P."/>
            <person name="Vincent R."/>
            <person name="Wingate V."/>
            <person name="Zouine M."/>
            <person name="Glaser P."/>
            <person name="Boemare N."/>
            <person name="Danchin A."/>
            <person name="Kunst F."/>
        </authorList>
    </citation>
    <scope>NUCLEOTIDE SEQUENCE [LARGE SCALE GENOMIC DNA]</scope>
    <source>
        <strain>DSM 15139 / CIP 105565 / TT01</strain>
    </source>
</reference>
<sequence>MISLLQVRDAVALNGRADAKLLSHQLSASLSMVEAMLEQLTVMGKLEKLNATACLSGSCKQCPEVQQCDTVVYRIAGGY</sequence>
<dbReference type="EMBL" id="BX571859">
    <property type="protein sequence ID" value="CAE12502.1"/>
    <property type="molecule type" value="Genomic_DNA"/>
</dbReference>
<dbReference type="RefSeq" id="WP_011144607.1">
    <property type="nucleotide sequence ID" value="NC_005126.1"/>
</dbReference>
<dbReference type="SMR" id="Q7N9V4"/>
<dbReference type="STRING" id="243265.plu0207"/>
<dbReference type="GeneID" id="48846504"/>
<dbReference type="KEGG" id="plu:plu0207"/>
<dbReference type="eggNOG" id="ENOG50330S2">
    <property type="taxonomic scope" value="Bacteria"/>
</dbReference>
<dbReference type="HOGENOM" id="CLU_189182_0_0_6"/>
<dbReference type="OrthoDB" id="6903254at2"/>
<dbReference type="Proteomes" id="UP000002514">
    <property type="component" value="Chromosome"/>
</dbReference>
<dbReference type="GO" id="GO:0003677">
    <property type="term" value="F:DNA binding"/>
    <property type="evidence" value="ECO:0007669"/>
    <property type="project" value="UniProtKB-KW"/>
</dbReference>
<dbReference type="GO" id="GO:0005506">
    <property type="term" value="F:iron ion binding"/>
    <property type="evidence" value="ECO:0007669"/>
    <property type="project" value="UniProtKB-UniRule"/>
</dbReference>
<dbReference type="GO" id="GO:0051536">
    <property type="term" value="F:iron-sulfur cluster binding"/>
    <property type="evidence" value="ECO:0007669"/>
    <property type="project" value="UniProtKB-KW"/>
</dbReference>
<dbReference type="Gene3D" id="1.10.10.10">
    <property type="entry name" value="Winged helix-like DNA-binding domain superfamily/Winged helix DNA-binding domain"/>
    <property type="match status" value="1"/>
</dbReference>
<dbReference type="HAMAP" id="MF_01586">
    <property type="entry name" value="FeoC"/>
    <property type="match status" value="1"/>
</dbReference>
<dbReference type="InterPro" id="IPR023732">
    <property type="entry name" value="FeoC"/>
</dbReference>
<dbReference type="InterPro" id="IPR015102">
    <property type="entry name" value="Tscrpt_reg_HTH_FeoC"/>
</dbReference>
<dbReference type="InterPro" id="IPR036388">
    <property type="entry name" value="WH-like_DNA-bd_sf"/>
</dbReference>
<dbReference type="InterPro" id="IPR036390">
    <property type="entry name" value="WH_DNA-bd_sf"/>
</dbReference>
<dbReference type="Pfam" id="PF09012">
    <property type="entry name" value="FeoC"/>
    <property type="match status" value="1"/>
</dbReference>
<dbReference type="SUPFAM" id="SSF46785">
    <property type="entry name" value="Winged helix' DNA-binding domain"/>
    <property type="match status" value="1"/>
</dbReference>
<keyword id="KW-0238">DNA-binding</keyword>
<keyword id="KW-0408">Iron</keyword>
<keyword id="KW-0411">Iron-sulfur</keyword>
<keyword id="KW-0479">Metal-binding</keyword>
<keyword id="KW-1185">Reference proteome</keyword>
<keyword id="KW-0678">Repressor</keyword>
<keyword id="KW-0804">Transcription</keyword>
<keyword id="KW-0805">Transcription regulation</keyword>
<name>FEOC_PHOLL</name>